<organism>
    <name type="scientific">Bacillus cereus (strain ZK / E33L)</name>
    <dbReference type="NCBI Taxonomy" id="288681"/>
    <lineage>
        <taxon>Bacteria</taxon>
        <taxon>Bacillati</taxon>
        <taxon>Bacillota</taxon>
        <taxon>Bacilli</taxon>
        <taxon>Bacillales</taxon>
        <taxon>Bacillaceae</taxon>
        <taxon>Bacillus</taxon>
        <taxon>Bacillus cereus group</taxon>
    </lineage>
</organism>
<sequence length="485" mass="52339">MSLFDHSVSELHKKLNNKEISVTDLVEESYKRIADVEDNVKAFLTLDEENARAKAKELDAKIGAEDNGLLFGMPIGVKDNIVTNGLRTTCASKMLANFDPIYDATVVQKLKAADTITIGKLNMDEFAMGSSNENSGFYATKNPWNLDYVPGGSSGGSAAAVAAGEVLFSLGSDTGGSIRQPAAYCGVVGLKPTYGRVSRYGLVAFASSLDQIGPITRTVEDNAYLLQAISGLDRMDATSANVEVGNYLAGLTGDVKGLRIAVPKEYLGEGVGEEARESVLAALKVLEGMGATWEEVSLPHSKYALATYYLLSSSEASANLSRFDGVRYGVRSDNVNNLMDLYKNTRSEGFGDEVKRRIMLGTFALSSGYYDAYYKKAQQVRTLIKNDFENVFANYDVIIGPTTPTPAFKVGEKVDDPMTMYANDILTIPVNLAGVPAISVPCGFGANNMPLGLQIIGKHFDEATIYRVAHAFEQATDYHTKKASL</sequence>
<keyword id="KW-0067">ATP-binding</keyword>
<keyword id="KW-0436">Ligase</keyword>
<keyword id="KW-0547">Nucleotide-binding</keyword>
<keyword id="KW-0648">Protein biosynthesis</keyword>
<accession>Q63GR0</accession>
<gene>
    <name evidence="1" type="primary">gatA</name>
    <name type="ordered locus">BCE33L0292</name>
</gene>
<comment type="function">
    <text evidence="1">Allows the formation of correctly charged Gln-tRNA(Gln) through the transamidation of misacylated Glu-tRNA(Gln) in organisms which lack glutaminyl-tRNA synthetase. The reaction takes place in the presence of glutamine and ATP through an activated gamma-phospho-Glu-tRNA(Gln).</text>
</comment>
<comment type="catalytic activity">
    <reaction evidence="1">
        <text>L-glutamyl-tRNA(Gln) + L-glutamine + ATP + H2O = L-glutaminyl-tRNA(Gln) + L-glutamate + ADP + phosphate + H(+)</text>
        <dbReference type="Rhea" id="RHEA:17521"/>
        <dbReference type="Rhea" id="RHEA-COMP:9681"/>
        <dbReference type="Rhea" id="RHEA-COMP:9684"/>
        <dbReference type="ChEBI" id="CHEBI:15377"/>
        <dbReference type="ChEBI" id="CHEBI:15378"/>
        <dbReference type="ChEBI" id="CHEBI:29985"/>
        <dbReference type="ChEBI" id="CHEBI:30616"/>
        <dbReference type="ChEBI" id="CHEBI:43474"/>
        <dbReference type="ChEBI" id="CHEBI:58359"/>
        <dbReference type="ChEBI" id="CHEBI:78520"/>
        <dbReference type="ChEBI" id="CHEBI:78521"/>
        <dbReference type="ChEBI" id="CHEBI:456216"/>
        <dbReference type="EC" id="6.3.5.7"/>
    </reaction>
</comment>
<comment type="subunit">
    <text evidence="1">Heterotrimer of A, B and C subunits.</text>
</comment>
<comment type="similarity">
    <text evidence="1">Belongs to the amidase family. GatA subfamily.</text>
</comment>
<dbReference type="EC" id="6.3.5.7" evidence="1"/>
<dbReference type="EMBL" id="CP000001">
    <property type="protein sequence ID" value="AAU19949.1"/>
    <property type="molecule type" value="Genomic_DNA"/>
</dbReference>
<dbReference type="RefSeq" id="WP_000051446.1">
    <property type="nucleotide sequence ID" value="NZ_CP009968.1"/>
</dbReference>
<dbReference type="SMR" id="Q63GR0"/>
<dbReference type="KEGG" id="bcz:BCE33L0292"/>
<dbReference type="PATRIC" id="fig|288681.22.peg.5314"/>
<dbReference type="Proteomes" id="UP000002612">
    <property type="component" value="Chromosome"/>
</dbReference>
<dbReference type="GO" id="GO:0030956">
    <property type="term" value="C:glutamyl-tRNA(Gln) amidotransferase complex"/>
    <property type="evidence" value="ECO:0007669"/>
    <property type="project" value="InterPro"/>
</dbReference>
<dbReference type="GO" id="GO:0005524">
    <property type="term" value="F:ATP binding"/>
    <property type="evidence" value="ECO:0007669"/>
    <property type="project" value="UniProtKB-KW"/>
</dbReference>
<dbReference type="GO" id="GO:0050567">
    <property type="term" value="F:glutaminyl-tRNA synthase (glutamine-hydrolyzing) activity"/>
    <property type="evidence" value="ECO:0007669"/>
    <property type="project" value="UniProtKB-UniRule"/>
</dbReference>
<dbReference type="GO" id="GO:0006412">
    <property type="term" value="P:translation"/>
    <property type="evidence" value="ECO:0007669"/>
    <property type="project" value="UniProtKB-UniRule"/>
</dbReference>
<dbReference type="Gene3D" id="3.90.1300.10">
    <property type="entry name" value="Amidase signature (AS) domain"/>
    <property type="match status" value="1"/>
</dbReference>
<dbReference type="HAMAP" id="MF_00120">
    <property type="entry name" value="GatA"/>
    <property type="match status" value="1"/>
</dbReference>
<dbReference type="InterPro" id="IPR000120">
    <property type="entry name" value="Amidase"/>
</dbReference>
<dbReference type="InterPro" id="IPR020556">
    <property type="entry name" value="Amidase_CS"/>
</dbReference>
<dbReference type="InterPro" id="IPR023631">
    <property type="entry name" value="Amidase_dom"/>
</dbReference>
<dbReference type="InterPro" id="IPR036928">
    <property type="entry name" value="AS_sf"/>
</dbReference>
<dbReference type="InterPro" id="IPR004412">
    <property type="entry name" value="GatA"/>
</dbReference>
<dbReference type="NCBIfam" id="TIGR00132">
    <property type="entry name" value="gatA"/>
    <property type="match status" value="1"/>
</dbReference>
<dbReference type="PANTHER" id="PTHR11895:SF151">
    <property type="entry name" value="GLUTAMYL-TRNA(GLN) AMIDOTRANSFERASE SUBUNIT A"/>
    <property type="match status" value="1"/>
</dbReference>
<dbReference type="PANTHER" id="PTHR11895">
    <property type="entry name" value="TRANSAMIDASE"/>
    <property type="match status" value="1"/>
</dbReference>
<dbReference type="Pfam" id="PF01425">
    <property type="entry name" value="Amidase"/>
    <property type="match status" value="1"/>
</dbReference>
<dbReference type="SUPFAM" id="SSF75304">
    <property type="entry name" value="Amidase signature (AS) enzymes"/>
    <property type="match status" value="1"/>
</dbReference>
<dbReference type="PROSITE" id="PS00571">
    <property type="entry name" value="AMIDASES"/>
    <property type="match status" value="1"/>
</dbReference>
<protein>
    <recommendedName>
        <fullName evidence="1">Glutamyl-tRNA(Gln) amidotransferase subunit A</fullName>
        <shortName evidence="1">Glu-ADT subunit A</shortName>
        <ecNumber evidence="1">6.3.5.7</ecNumber>
    </recommendedName>
</protein>
<evidence type="ECO:0000255" key="1">
    <source>
        <dbReference type="HAMAP-Rule" id="MF_00120"/>
    </source>
</evidence>
<reference key="1">
    <citation type="journal article" date="2006" name="J. Bacteriol.">
        <title>Pathogenomic sequence analysis of Bacillus cereus and Bacillus thuringiensis isolates closely related to Bacillus anthracis.</title>
        <authorList>
            <person name="Han C.S."/>
            <person name="Xie G."/>
            <person name="Challacombe J.F."/>
            <person name="Altherr M.R."/>
            <person name="Bhotika S.S."/>
            <person name="Bruce D."/>
            <person name="Campbell C.S."/>
            <person name="Campbell M.L."/>
            <person name="Chen J."/>
            <person name="Chertkov O."/>
            <person name="Cleland C."/>
            <person name="Dimitrijevic M."/>
            <person name="Doggett N.A."/>
            <person name="Fawcett J.J."/>
            <person name="Glavina T."/>
            <person name="Goodwin L.A."/>
            <person name="Hill K.K."/>
            <person name="Hitchcock P."/>
            <person name="Jackson P.J."/>
            <person name="Keim P."/>
            <person name="Kewalramani A.R."/>
            <person name="Longmire J."/>
            <person name="Lucas S."/>
            <person name="Malfatti S."/>
            <person name="McMurry K."/>
            <person name="Meincke L.J."/>
            <person name="Misra M."/>
            <person name="Moseman B.L."/>
            <person name="Mundt M."/>
            <person name="Munk A.C."/>
            <person name="Okinaka R.T."/>
            <person name="Parson-Quintana B."/>
            <person name="Reilly L.P."/>
            <person name="Richardson P."/>
            <person name="Robinson D.L."/>
            <person name="Rubin E."/>
            <person name="Saunders E."/>
            <person name="Tapia R."/>
            <person name="Tesmer J.G."/>
            <person name="Thayer N."/>
            <person name="Thompson L.S."/>
            <person name="Tice H."/>
            <person name="Ticknor L.O."/>
            <person name="Wills P.L."/>
            <person name="Brettin T.S."/>
            <person name="Gilna P."/>
        </authorList>
    </citation>
    <scope>NUCLEOTIDE SEQUENCE [LARGE SCALE GENOMIC DNA]</scope>
    <source>
        <strain>ZK / E33L</strain>
    </source>
</reference>
<proteinExistence type="inferred from homology"/>
<feature type="chain" id="PRO_0000241069" description="Glutamyl-tRNA(Gln) amidotransferase subunit A">
    <location>
        <begin position="1"/>
        <end position="485"/>
    </location>
</feature>
<feature type="active site" description="Charge relay system" evidence="1">
    <location>
        <position position="78"/>
    </location>
</feature>
<feature type="active site" description="Charge relay system" evidence="1">
    <location>
        <position position="153"/>
    </location>
</feature>
<feature type="active site" description="Acyl-ester intermediate" evidence="1">
    <location>
        <position position="177"/>
    </location>
</feature>
<name>GATA_BACCZ</name>